<evidence type="ECO:0000250" key="1">
    <source>
        <dbReference type="UniProtKB" id="Q96DW6"/>
    </source>
</evidence>
<evidence type="ECO:0000255" key="2">
    <source>
        <dbReference type="HAMAP-Rule" id="MF_03064"/>
    </source>
</evidence>
<organism>
    <name type="scientific">Aspergillus terreus (strain NIH 2624 / FGSC A1156)</name>
    <dbReference type="NCBI Taxonomy" id="341663"/>
    <lineage>
        <taxon>Eukaryota</taxon>
        <taxon>Fungi</taxon>
        <taxon>Dikarya</taxon>
        <taxon>Ascomycota</taxon>
        <taxon>Pezizomycotina</taxon>
        <taxon>Eurotiomycetes</taxon>
        <taxon>Eurotiomycetidae</taxon>
        <taxon>Eurotiales</taxon>
        <taxon>Aspergillaceae</taxon>
        <taxon>Aspergillus</taxon>
        <taxon>Aspergillus subgen. Circumdati</taxon>
    </lineage>
</organism>
<accession>Q0CT66</accession>
<proteinExistence type="inferred from homology"/>
<sequence>MSNNAAYLAPQVKTTSTSSKTTFHFAAGLCSGLTSSILLQPADLLKTRVQQSQQTAALLPTLKTILSSPHPIRSLWRGTLPSALRTGFGSALYFTTLNALRQPLAQSAVLTGSNGSANKGTKSSSALPKLSNWANLGTGAVARVAAGFVMMPVTVIKVRYESDYYAYRSLYGAGRDIVRTEGFRGLFSGFGATAARDAPYAGLYVLFYEQLKRHLAGLKHSGTADQPLAATSSSSINFISGGLAAGLATTITNPFDAVKTRLQLMPGKYGNMMRAVKLMIQEDGVRSLFGGLGLRITRKALSSALAWTVYEELILRAEIRWAEKAHAHV</sequence>
<reference key="1">
    <citation type="submission" date="2005-09" db="EMBL/GenBank/DDBJ databases">
        <title>Annotation of the Aspergillus terreus NIH2624 genome.</title>
        <authorList>
            <person name="Birren B.W."/>
            <person name="Lander E.S."/>
            <person name="Galagan J.E."/>
            <person name="Nusbaum C."/>
            <person name="Devon K."/>
            <person name="Henn M."/>
            <person name="Ma L.-J."/>
            <person name="Jaffe D.B."/>
            <person name="Butler J."/>
            <person name="Alvarez P."/>
            <person name="Gnerre S."/>
            <person name="Grabherr M."/>
            <person name="Kleber M."/>
            <person name="Mauceli E.W."/>
            <person name="Brockman W."/>
            <person name="Rounsley S."/>
            <person name="Young S.K."/>
            <person name="LaButti K."/>
            <person name="Pushparaj V."/>
            <person name="DeCaprio D."/>
            <person name="Crawford M."/>
            <person name="Koehrsen M."/>
            <person name="Engels R."/>
            <person name="Montgomery P."/>
            <person name="Pearson M."/>
            <person name="Howarth C."/>
            <person name="Larson L."/>
            <person name="Luoma S."/>
            <person name="White J."/>
            <person name="Alvarado L."/>
            <person name="Kodira C.D."/>
            <person name="Zeng Q."/>
            <person name="Oleary S."/>
            <person name="Yandava C."/>
            <person name="Denning D.W."/>
            <person name="Nierman W.C."/>
            <person name="Milne T."/>
            <person name="Madden K."/>
        </authorList>
    </citation>
    <scope>NUCLEOTIDE SEQUENCE [LARGE SCALE GENOMIC DNA]</scope>
    <source>
        <strain>NIH 2624 / FGSC A1156</strain>
    </source>
</reference>
<feature type="chain" id="PRO_0000378929" description="Mitochondrial glycine transporter">
    <location>
        <begin position="1"/>
        <end position="329"/>
    </location>
</feature>
<feature type="transmembrane region" description="Helical; Name=1" evidence="2">
    <location>
        <begin position="25"/>
        <end position="50"/>
    </location>
</feature>
<feature type="transmembrane region" description="Helical; Name=2" evidence="2">
    <location>
        <begin position="78"/>
        <end position="104"/>
    </location>
</feature>
<feature type="transmembrane region" description="Helical; Name=3" evidence="2">
    <location>
        <begin position="136"/>
        <end position="161"/>
    </location>
</feature>
<feature type="transmembrane region" description="Helical; Name=4" evidence="2">
    <location>
        <begin position="189"/>
        <end position="212"/>
    </location>
</feature>
<feature type="transmembrane region" description="Helical; Name=5" evidence="2">
    <location>
        <begin position="236"/>
        <end position="262"/>
    </location>
</feature>
<feature type="transmembrane region" description="Helical; Name=6" evidence="2">
    <location>
        <begin position="291"/>
        <end position="309"/>
    </location>
</feature>
<feature type="repeat" description="Solcar 1" evidence="2">
    <location>
        <begin position="19"/>
        <end position="103"/>
    </location>
</feature>
<feature type="repeat" description="Solcar 2" evidence="2">
    <location>
        <begin position="130"/>
        <end position="214"/>
    </location>
</feature>
<feature type="repeat" description="Solcar 3" evidence="2">
    <location>
        <begin position="232"/>
        <end position="316"/>
    </location>
</feature>
<gene>
    <name type="ORF">ATEG_03118</name>
</gene>
<dbReference type="EMBL" id="CH476597">
    <property type="protein sequence ID" value="EAU36392.1"/>
    <property type="molecule type" value="Genomic_DNA"/>
</dbReference>
<dbReference type="RefSeq" id="XP_001212296.1">
    <property type="nucleotide sequence ID" value="XM_001212296.1"/>
</dbReference>
<dbReference type="SMR" id="Q0CT66"/>
<dbReference type="STRING" id="341663.Q0CT66"/>
<dbReference type="EnsemblFungi" id="EAU36392">
    <property type="protein sequence ID" value="EAU36392"/>
    <property type="gene ID" value="ATEG_03118"/>
</dbReference>
<dbReference type="GeneID" id="4317801"/>
<dbReference type="VEuPathDB" id="FungiDB:ATEG_03118"/>
<dbReference type="eggNOG" id="KOG0766">
    <property type="taxonomic scope" value="Eukaryota"/>
</dbReference>
<dbReference type="HOGENOM" id="CLU_015166_0_3_1"/>
<dbReference type="OMA" id="WGIYEEL"/>
<dbReference type="OrthoDB" id="1924968at2759"/>
<dbReference type="Proteomes" id="UP000007963">
    <property type="component" value="Unassembled WGS sequence"/>
</dbReference>
<dbReference type="GO" id="GO:0005743">
    <property type="term" value="C:mitochondrial inner membrane"/>
    <property type="evidence" value="ECO:0007669"/>
    <property type="project" value="UniProtKB-SubCell"/>
</dbReference>
<dbReference type="GO" id="GO:0015187">
    <property type="term" value="F:glycine transmembrane transporter activity"/>
    <property type="evidence" value="ECO:0007669"/>
    <property type="project" value="UniProtKB-UniRule"/>
</dbReference>
<dbReference type="GO" id="GO:1904983">
    <property type="term" value="P:glycine import into mitochondrion"/>
    <property type="evidence" value="ECO:0007669"/>
    <property type="project" value="UniProtKB-UniRule"/>
</dbReference>
<dbReference type="GO" id="GO:0006783">
    <property type="term" value="P:heme biosynthetic process"/>
    <property type="evidence" value="ECO:0007669"/>
    <property type="project" value="EnsemblFungi"/>
</dbReference>
<dbReference type="FunFam" id="1.50.40.10:FF:000103">
    <property type="entry name" value="Mitochondrial glycine transporter"/>
    <property type="match status" value="1"/>
</dbReference>
<dbReference type="Gene3D" id="1.50.40.10">
    <property type="entry name" value="Mitochondrial carrier domain"/>
    <property type="match status" value="1"/>
</dbReference>
<dbReference type="HAMAP" id="MF_03064">
    <property type="entry name" value="SLC25A38"/>
    <property type="match status" value="1"/>
</dbReference>
<dbReference type="InterPro" id="IPR030847">
    <property type="entry name" value="Hem25/SLC25A38"/>
</dbReference>
<dbReference type="InterPro" id="IPR018108">
    <property type="entry name" value="Mitochondrial_sb/sol_carrier"/>
</dbReference>
<dbReference type="InterPro" id="IPR023395">
    <property type="entry name" value="Mt_carrier_dom_sf"/>
</dbReference>
<dbReference type="PANTHER" id="PTHR46181">
    <property type="entry name" value="MITOCHONDRIAL GLYCINE TRANSPORTER"/>
    <property type="match status" value="1"/>
</dbReference>
<dbReference type="PANTHER" id="PTHR46181:SF3">
    <property type="entry name" value="MITOCHONDRIAL GLYCINE TRANSPORTER"/>
    <property type="match status" value="1"/>
</dbReference>
<dbReference type="Pfam" id="PF00153">
    <property type="entry name" value="Mito_carr"/>
    <property type="match status" value="3"/>
</dbReference>
<dbReference type="SUPFAM" id="SSF103506">
    <property type="entry name" value="Mitochondrial carrier"/>
    <property type="match status" value="1"/>
</dbReference>
<dbReference type="PROSITE" id="PS50920">
    <property type="entry name" value="SOLCAR"/>
    <property type="match status" value="3"/>
</dbReference>
<comment type="function">
    <text evidence="2">Mitochondrial glycine transporter that imports glycine into the mitochondrial matrix. Plays an important role in providing glycine for the first enzymatic step in heme biosynthesis, the condensation of glycine with succinyl-CoA to produce 5-aminolevulinate (ALA) in the mitochondrial matrix.</text>
</comment>
<comment type="catalytic activity">
    <reaction evidence="1">
        <text>glycine(in) = glycine(out)</text>
        <dbReference type="Rhea" id="RHEA:70715"/>
        <dbReference type="ChEBI" id="CHEBI:57305"/>
    </reaction>
</comment>
<comment type="subcellular location">
    <subcellularLocation>
        <location evidence="2">Mitochondrion inner membrane</location>
        <topology evidence="2">Multi-pass membrane protein</topology>
    </subcellularLocation>
</comment>
<comment type="similarity">
    <text evidence="2">Belongs to the mitochondrial carrier (TC 2.A.29) family. SLC25A38 subfamily.</text>
</comment>
<protein>
    <recommendedName>
        <fullName evidence="2">Mitochondrial glycine transporter</fullName>
    </recommendedName>
    <alternativeName>
        <fullName evidence="2">Solute carrier family 25 member 38 homolog</fullName>
    </alternativeName>
</protein>
<name>S2538_ASPTN</name>
<keyword id="KW-0472">Membrane</keyword>
<keyword id="KW-0496">Mitochondrion</keyword>
<keyword id="KW-0999">Mitochondrion inner membrane</keyword>
<keyword id="KW-1185">Reference proteome</keyword>
<keyword id="KW-0677">Repeat</keyword>
<keyword id="KW-0812">Transmembrane</keyword>
<keyword id="KW-1133">Transmembrane helix</keyword>
<keyword id="KW-0813">Transport</keyword>